<accession>Q96DV4</accession>
<accession>B3KN96</accession>
<accession>Q96Q66</accession>
<accession>Q9P0B9</accession>
<organism>
    <name type="scientific">Homo sapiens</name>
    <name type="common">Human</name>
    <dbReference type="NCBI Taxonomy" id="9606"/>
    <lineage>
        <taxon>Eukaryota</taxon>
        <taxon>Metazoa</taxon>
        <taxon>Chordata</taxon>
        <taxon>Craniata</taxon>
        <taxon>Vertebrata</taxon>
        <taxon>Euteleostomi</taxon>
        <taxon>Mammalia</taxon>
        <taxon>Eutheria</taxon>
        <taxon>Euarchontoglires</taxon>
        <taxon>Primates</taxon>
        <taxon>Haplorrhini</taxon>
        <taxon>Catarrhini</taxon>
        <taxon>Hominidae</taxon>
        <taxon>Homo</taxon>
    </lineage>
</organism>
<comment type="subunit">
    <text evidence="2 3 4 5">Component of the mitochondrial large ribosomal subunit (mt-LSU) (PubMed:25278503, PubMed:25838379, PubMed:28892042, PubMed:35177605). Mature mammalian 55S mitochondrial ribosomes consist of a small (28S) and a large (39S) subunit. The 28S small subunit contains a 12S ribosomal RNA (12S mt-rRNA) and 30 different proteins. The 39S large subunit contains a 16S rRNA (16S mt-rRNA), a copy of mitochondrial valine transfer RNA (mt-tRNA(Val)), which plays an integral structural role, and 52 different proteins. mL38 is located at the central protuberance.</text>
</comment>
<comment type="interaction">
    <interactant intactId="EBI-720441">
        <id>Q96DV4</id>
    </interactant>
    <interactant intactId="EBI-750254">
        <id>Q9BRR9</id>
        <label>ARHGAP9</label>
    </interactant>
    <organismsDiffer>false</organismsDiffer>
    <experiments>3</experiments>
</comment>
<comment type="interaction">
    <interactant intactId="EBI-720441">
        <id>Q96DV4</id>
    </interactant>
    <interactant intactId="EBI-747185">
        <id>O95817</id>
        <label>BAG3</label>
    </interactant>
    <organismsDiffer>false</organismsDiffer>
    <experiments>3</experiments>
</comment>
<comment type="interaction">
    <interactant intactId="EBI-720441">
        <id>Q96DV4</id>
    </interactant>
    <interactant intactId="EBI-745073">
        <id>Q9BXY8</id>
        <label>BEX2</label>
    </interactant>
    <organismsDiffer>false</organismsDiffer>
    <experiments>3</experiments>
</comment>
<comment type="interaction">
    <interactant intactId="EBI-720441">
        <id>Q96DV4</id>
    </interactant>
    <interactant intactId="EBI-744556">
        <id>Q96HB5</id>
        <label>CCDC120</label>
    </interactant>
    <organismsDiffer>false</organismsDiffer>
    <experiments>3</experiments>
</comment>
<comment type="interaction">
    <interactant intactId="EBI-720441">
        <id>Q96DV4</id>
    </interactant>
    <interactant intactId="EBI-11028020">
        <id>Q86UT8</id>
        <label>CENATAC</label>
    </interactant>
    <organismsDiffer>false</organismsDiffer>
    <experiments>3</experiments>
</comment>
<comment type="interaction">
    <interactant intactId="EBI-720441">
        <id>Q96DV4</id>
    </interactant>
    <interactant intactId="EBI-744099">
        <id>Q9H0I2</id>
        <label>ENKD1</label>
    </interactant>
    <organismsDiffer>false</organismsDiffer>
    <experiments>3</experiments>
</comment>
<comment type="interaction">
    <interactant intactId="EBI-720441">
        <id>Q96DV4</id>
    </interactant>
    <interactant intactId="EBI-372506">
        <id>Q8TAE8</id>
        <label>GADD45GIP1</label>
    </interactant>
    <organismsDiffer>false</organismsDiffer>
    <experiments>5</experiments>
</comment>
<comment type="interaction">
    <interactant intactId="EBI-720441">
        <id>Q96DV4</id>
    </interactant>
    <interactant intactId="EBI-11163335">
        <id>Q9NYA3</id>
        <label>GOLGA6A</label>
    </interactant>
    <organismsDiffer>false</organismsDiffer>
    <experiments>3</experiments>
</comment>
<comment type="interaction">
    <interactant intactId="EBI-720441">
        <id>Q96DV4</id>
    </interactant>
    <interactant intactId="EBI-2341787">
        <id>Q17RB8</id>
        <label>LONRF1</label>
    </interactant>
    <organismsDiffer>false</organismsDiffer>
    <experiments>3</experiments>
</comment>
<comment type="interaction">
    <interactant intactId="EBI-720441">
        <id>Q96DV4</id>
    </interactant>
    <interactant intactId="EBI-2340269">
        <id>Q13064</id>
        <label>MKRN3</label>
    </interactant>
    <organismsDiffer>false</organismsDiffer>
    <experiments>3</experiments>
</comment>
<comment type="interaction">
    <interactant intactId="EBI-720441">
        <id>Q96DV4</id>
    </interactant>
    <interactant intactId="EBI-2560240">
        <id>Q9H0U6</id>
        <label>MRPL18</label>
    </interactant>
    <organismsDiffer>false</organismsDiffer>
    <experiments>6</experiments>
</comment>
<comment type="interaction">
    <interactant intactId="EBI-720441">
        <id>Q96DV4</id>
    </interactant>
    <interactant intactId="EBI-10977303">
        <id>Q86TS9</id>
        <label>MRPL52</label>
    </interactant>
    <organismsDiffer>false</organismsDiffer>
    <experiments>3</experiments>
</comment>
<comment type="interaction">
    <interactant intactId="EBI-720441">
        <id>Q96DV4</id>
    </interactant>
    <interactant intactId="EBI-5662487">
        <id>Q8TDC0</id>
        <label>MYOZ3</label>
    </interactant>
    <organismsDiffer>false</organismsDiffer>
    <experiments>3</experiments>
</comment>
<comment type="interaction">
    <interactant intactId="EBI-720441">
        <id>Q96DV4</id>
    </interactant>
    <interactant intactId="EBI-2557469">
        <id>Q6NYC8</id>
        <label>PPP1R18</label>
    </interactant>
    <organismsDiffer>false</organismsDiffer>
    <experiments>3</experiments>
</comment>
<comment type="interaction">
    <interactant intactId="EBI-720441">
        <id>Q96DV4</id>
    </interactant>
    <interactant intactId="EBI-912440">
        <id>Q96LA8</id>
        <label>PRMT6</label>
    </interactant>
    <organismsDiffer>false</organismsDiffer>
    <experiments>3</experiments>
</comment>
<comment type="interaction">
    <interactant intactId="EBI-720441">
        <id>Q96DV4</id>
    </interactant>
    <interactant intactId="EBI-9512693">
        <id>Q53GL6</id>
        <label>RALY</label>
    </interactant>
    <organismsDiffer>false</organismsDiffer>
    <experiments>3</experiments>
</comment>
<comment type="interaction">
    <interactant intactId="EBI-720441">
        <id>Q96DV4</id>
    </interactant>
    <interactant intactId="EBI-356849">
        <id>P26373</id>
        <label>RPL13</label>
    </interactant>
    <organismsDiffer>false</organismsDiffer>
    <experiments>2</experiments>
</comment>
<comment type="interaction">
    <interactant intactId="EBI-720441">
        <id>Q96DV4</id>
    </interactant>
    <interactant intactId="EBI-2559824">
        <id>Q7Z6J9</id>
        <label>TSEN54</label>
    </interactant>
    <organismsDiffer>false</organismsDiffer>
    <experiments>3</experiments>
</comment>
<comment type="subcellular location">
    <subcellularLocation>
        <location evidence="2 3 4">Mitochondrion</location>
    </subcellularLocation>
</comment>
<comment type="alternative products">
    <event type="alternative splicing"/>
    <isoform>
        <id>Q96DV4-1</id>
        <name>1</name>
        <sequence type="displayed"/>
    </isoform>
    <isoform>
        <id>Q96DV4-2</id>
        <name>2</name>
        <sequence type="described" ref="VSP_056090"/>
    </isoform>
</comment>
<comment type="similarity">
    <text evidence="8">Belongs to the phosphatidylethanolamine-binding protein family. Mitochondrion-specific ribosomal protein mL38 subfamily.</text>
</comment>
<comment type="sequence caution" evidence="8">
    <conflict type="erroneous initiation">
        <sequence resource="EMBL-CDS" id="AAH13311"/>
    </conflict>
</comment>
<keyword id="KW-0002">3D-structure</keyword>
<keyword id="KW-0025">Alternative splicing</keyword>
<keyword id="KW-0175">Coiled coil</keyword>
<keyword id="KW-0496">Mitochondrion</keyword>
<keyword id="KW-1267">Proteomics identification</keyword>
<keyword id="KW-1185">Reference proteome</keyword>
<keyword id="KW-0687">Ribonucleoprotein</keyword>
<keyword id="KW-0689">Ribosomal protein</keyword>
<keyword id="KW-0809">Transit peptide</keyword>
<proteinExistence type="evidence at protein level"/>
<evidence type="ECO:0000255" key="1"/>
<evidence type="ECO:0000269" key="2">
    <source>
    </source>
</evidence>
<evidence type="ECO:0000269" key="3">
    <source>
    </source>
</evidence>
<evidence type="ECO:0000269" key="4">
    <source>
    </source>
</evidence>
<evidence type="ECO:0000269" key="5">
    <source>
    </source>
</evidence>
<evidence type="ECO:0000303" key="6">
    <source>
    </source>
</evidence>
<evidence type="ECO:0000303" key="7">
    <source>
    </source>
</evidence>
<evidence type="ECO:0000305" key="8"/>
<evidence type="ECO:0007744" key="9">
    <source>
        <dbReference type="PDB" id="3J7Y"/>
    </source>
</evidence>
<evidence type="ECO:0007744" key="10">
    <source>
        <dbReference type="PDB" id="3J9M"/>
    </source>
</evidence>
<evidence type="ECO:0007744" key="11">
    <source>
        <dbReference type="PDB" id="5OOL"/>
    </source>
</evidence>
<evidence type="ECO:0007744" key="12">
    <source>
        <dbReference type="PDB" id="5OOM"/>
    </source>
</evidence>
<evidence type="ECO:0007744" key="13">
    <source>
        <dbReference type="PDB" id="7QH6"/>
    </source>
</evidence>
<evidence type="ECO:0007744" key="14">
    <source>
        <dbReference type="PDB" id="7QH7"/>
    </source>
</evidence>
<evidence type="ECO:0007829" key="15">
    <source>
        <dbReference type="PDB" id="3J7Y"/>
    </source>
</evidence>
<evidence type="ECO:0007829" key="16">
    <source>
        <dbReference type="PDB" id="5OOL"/>
    </source>
</evidence>
<evidence type="ECO:0007829" key="17">
    <source>
        <dbReference type="PDB" id="7OF0"/>
    </source>
</evidence>
<evidence type="ECO:0007829" key="18">
    <source>
        <dbReference type="PDB" id="7OI7"/>
    </source>
</evidence>
<evidence type="ECO:0007829" key="19">
    <source>
        <dbReference type="PDB" id="8QU1"/>
    </source>
</evidence>
<reference key="1">
    <citation type="journal article" date="2004" name="Nat. Genet.">
        <title>Complete sequencing and characterization of 21,243 full-length human cDNAs.</title>
        <authorList>
            <person name="Ota T."/>
            <person name="Suzuki Y."/>
            <person name="Nishikawa T."/>
            <person name="Otsuki T."/>
            <person name="Sugiyama T."/>
            <person name="Irie R."/>
            <person name="Wakamatsu A."/>
            <person name="Hayashi K."/>
            <person name="Sato H."/>
            <person name="Nagai K."/>
            <person name="Kimura K."/>
            <person name="Makita H."/>
            <person name="Sekine M."/>
            <person name="Obayashi M."/>
            <person name="Nishi T."/>
            <person name="Shibahara T."/>
            <person name="Tanaka T."/>
            <person name="Ishii S."/>
            <person name="Yamamoto J."/>
            <person name="Saito K."/>
            <person name="Kawai Y."/>
            <person name="Isono Y."/>
            <person name="Nakamura Y."/>
            <person name="Nagahari K."/>
            <person name="Murakami K."/>
            <person name="Yasuda T."/>
            <person name="Iwayanagi T."/>
            <person name="Wagatsuma M."/>
            <person name="Shiratori A."/>
            <person name="Sudo H."/>
            <person name="Hosoiri T."/>
            <person name="Kaku Y."/>
            <person name="Kodaira H."/>
            <person name="Kondo H."/>
            <person name="Sugawara M."/>
            <person name="Takahashi M."/>
            <person name="Kanda K."/>
            <person name="Yokoi T."/>
            <person name="Furuya T."/>
            <person name="Kikkawa E."/>
            <person name="Omura Y."/>
            <person name="Abe K."/>
            <person name="Kamihara K."/>
            <person name="Katsuta N."/>
            <person name="Sato K."/>
            <person name="Tanikawa M."/>
            <person name="Yamazaki M."/>
            <person name="Ninomiya K."/>
            <person name="Ishibashi T."/>
            <person name="Yamashita H."/>
            <person name="Murakawa K."/>
            <person name="Fujimori K."/>
            <person name="Tanai H."/>
            <person name="Kimata M."/>
            <person name="Watanabe M."/>
            <person name="Hiraoka S."/>
            <person name="Chiba Y."/>
            <person name="Ishida S."/>
            <person name="Ono Y."/>
            <person name="Takiguchi S."/>
            <person name="Watanabe S."/>
            <person name="Yosida M."/>
            <person name="Hotuta T."/>
            <person name="Kusano J."/>
            <person name="Kanehori K."/>
            <person name="Takahashi-Fujii A."/>
            <person name="Hara H."/>
            <person name="Tanase T.-O."/>
            <person name="Nomura Y."/>
            <person name="Togiya S."/>
            <person name="Komai F."/>
            <person name="Hara R."/>
            <person name="Takeuchi K."/>
            <person name="Arita M."/>
            <person name="Imose N."/>
            <person name="Musashino K."/>
            <person name="Yuuki H."/>
            <person name="Oshima A."/>
            <person name="Sasaki N."/>
            <person name="Aotsuka S."/>
            <person name="Yoshikawa Y."/>
            <person name="Matsunawa H."/>
            <person name="Ichihara T."/>
            <person name="Shiohata N."/>
            <person name="Sano S."/>
            <person name="Moriya S."/>
            <person name="Momiyama H."/>
            <person name="Satoh N."/>
            <person name="Takami S."/>
            <person name="Terashima Y."/>
            <person name="Suzuki O."/>
            <person name="Nakagawa S."/>
            <person name="Senoh A."/>
            <person name="Mizoguchi H."/>
            <person name="Goto Y."/>
            <person name="Shimizu F."/>
            <person name="Wakebe H."/>
            <person name="Hishigaki H."/>
            <person name="Watanabe T."/>
            <person name="Sugiyama A."/>
            <person name="Takemoto M."/>
            <person name="Kawakami B."/>
            <person name="Yamazaki M."/>
            <person name="Watanabe K."/>
            <person name="Kumagai A."/>
            <person name="Itakura S."/>
            <person name="Fukuzumi Y."/>
            <person name="Fujimori Y."/>
            <person name="Komiyama M."/>
            <person name="Tashiro H."/>
            <person name="Tanigami A."/>
            <person name="Fujiwara T."/>
            <person name="Ono T."/>
            <person name="Yamada K."/>
            <person name="Fujii Y."/>
            <person name="Ozaki K."/>
            <person name="Hirao M."/>
            <person name="Ohmori Y."/>
            <person name="Kawabata A."/>
            <person name="Hikiji T."/>
            <person name="Kobatake N."/>
            <person name="Inagaki H."/>
            <person name="Ikema Y."/>
            <person name="Okamoto S."/>
            <person name="Okitani R."/>
            <person name="Kawakami T."/>
            <person name="Noguchi S."/>
            <person name="Itoh T."/>
            <person name="Shigeta K."/>
            <person name="Senba T."/>
            <person name="Matsumura K."/>
            <person name="Nakajima Y."/>
            <person name="Mizuno T."/>
            <person name="Morinaga M."/>
            <person name="Sasaki M."/>
            <person name="Togashi T."/>
            <person name="Oyama M."/>
            <person name="Hata H."/>
            <person name="Watanabe M."/>
            <person name="Komatsu T."/>
            <person name="Mizushima-Sugano J."/>
            <person name="Satoh T."/>
            <person name="Shirai Y."/>
            <person name="Takahashi Y."/>
            <person name="Nakagawa K."/>
            <person name="Okumura K."/>
            <person name="Nagase T."/>
            <person name="Nomura N."/>
            <person name="Kikuchi H."/>
            <person name="Masuho Y."/>
            <person name="Yamashita R."/>
            <person name="Nakai K."/>
            <person name="Yada T."/>
            <person name="Nakamura Y."/>
            <person name="Ohara O."/>
            <person name="Isogai T."/>
            <person name="Sugano S."/>
        </authorList>
    </citation>
    <scope>NUCLEOTIDE SEQUENCE [LARGE SCALE MRNA] (ISOFORM 2)</scope>
</reference>
<reference key="2">
    <citation type="journal article" date="2006" name="Nature">
        <title>DNA sequence of human chromosome 17 and analysis of rearrangement in the human lineage.</title>
        <authorList>
            <person name="Zody M.C."/>
            <person name="Garber M."/>
            <person name="Adams D.J."/>
            <person name="Sharpe T."/>
            <person name="Harrow J."/>
            <person name="Lupski J.R."/>
            <person name="Nicholson C."/>
            <person name="Searle S.M."/>
            <person name="Wilming L."/>
            <person name="Young S.K."/>
            <person name="Abouelleil A."/>
            <person name="Allen N.R."/>
            <person name="Bi W."/>
            <person name="Bloom T."/>
            <person name="Borowsky M.L."/>
            <person name="Bugalter B.E."/>
            <person name="Butler J."/>
            <person name="Chang J.L."/>
            <person name="Chen C.-K."/>
            <person name="Cook A."/>
            <person name="Corum B."/>
            <person name="Cuomo C.A."/>
            <person name="de Jong P.J."/>
            <person name="DeCaprio D."/>
            <person name="Dewar K."/>
            <person name="FitzGerald M."/>
            <person name="Gilbert J."/>
            <person name="Gibson R."/>
            <person name="Gnerre S."/>
            <person name="Goldstein S."/>
            <person name="Grafham D.V."/>
            <person name="Grocock R."/>
            <person name="Hafez N."/>
            <person name="Hagopian D.S."/>
            <person name="Hart E."/>
            <person name="Norman C.H."/>
            <person name="Humphray S."/>
            <person name="Jaffe D.B."/>
            <person name="Jones M."/>
            <person name="Kamal M."/>
            <person name="Khodiyar V.K."/>
            <person name="LaButti K."/>
            <person name="Laird G."/>
            <person name="Lehoczky J."/>
            <person name="Liu X."/>
            <person name="Lokyitsang T."/>
            <person name="Loveland J."/>
            <person name="Lui A."/>
            <person name="Macdonald P."/>
            <person name="Major J.E."/>
            <person name="Matthews L."/>
            <person name="Mauceli E."/>
            <person name="McCarroll S.A."/>
            <person name="Mihalev A.H."/>
            <person name="Mudge J."/>
            <person name="Nguyen C."/>
            <person name="Nicol R."/>
            <person name="O'Leary S.B."/>
            <person name="Osoegawa K."/>
            <person name="Schwartz D.C."/>
            <person name="Shaw-Smith C."/>
            <person name="Stankiewicz P."/>
            <person name="Steward C."/>
            <person name="Swarbreck D."/>
            <person name="Venkataraman V."/>
            <person name="Whittaker C.A."/>
            <person name="Yang X."/>
            <person name="Zimmer A.R."/>
            <person name="Bradley A."/>
            <person name="Hubbard T."/>
            <person name="Birren B.W."/>
            <person name="Rogers J."/>
            <person name="Lander E.S."/>
            <person name="Nusbaum C."/>
        </authorList>
    </citation>
    <scope>NUCLEOTIDE SEQUENCE [LARGE SCALE GENOMIC DNA]</scope>
</reference>
<reference key="3">
    <citation type="journal article" date="2004" name="Genome Res.">
        <title>The status, quality, and expansion of the NIH full-length cDNA project: the Mammalian Gene Collection (MGC).</title>
        <authorList>
            <consortium name="The MGC Project Team"/>
        </authorList>
    </citation>
    <scope>NUCLEOTIDE SEQUENCE [LARGE SCALE MRNA] (ISOFORM 1)</scope>
    <source>
        <tissue>Colon</tissue>
    </source>
</reference>
<reference key="4">
    <citation type="journal article" date="2001" name="Genomics">
        <title>The human mitochondrial ribosomal protein genes: mapping of 54 genes to the chromosomes and implications for human disorders.</title>
        <authorList>
            <person name="Kenmochi N."/>
            <person name="Suzuki T."/>
            <person name="Uechi T."/>
            <person name="Magoori M."/>
            <person name="Kuniba M."/>
            <person name="Higa S."/>
            <person name="Watanabe K."/>
            <person name="Tanaka T."/>
        </authorList>
    </citation>
    <scope>NUCLEOTIDE SEQUENCE [GENOMIC DNA] OF 185-197</scope>
</reference>
<reference key="5">
    <citation type="submission" date="1999-05" db="EMBL/GenBank/DDBJ databases">
        <title>Human partial CDS from CD34+ stem cells.</title>
        <authorList>
            <person name="Ye M."/>
            <person name="Zhang Q.-H."/>
            <person name="Zhou J."/>
            <person name="Shen Y."/>
            <person name="Wu X.-Y."/>
            <person name="Guan Z.Q."/>
            <person name="Wang L."/>
            <person name="Fan H.-Y."/>
            <person name="Mao Y.-F."/>
            <person name="Dai M."/>
            <person name="Huang Q.-H."/>
            <person name="Chen S.-J."/>
            <person name="Chen Z."/>
        </authorList>
    </citation>
    <scope>NUCLEOTIDE SEQUENCE [LARGE SCALE MRNA] OF 207-346 (ISOFORM 1)</scope>
    <source>
        <tissue>Umbilical cord blood</tissue>
    </source>
</reference>
<reference key="6">
    <citation type="journal article" date="2011" name="BMC Syst. Biol.">
        <title>Initial characterization of the human central proteome.</title>
        <authorList>
            <person name="Burkard T.R."/>
            <person name="Planyavsky M."/>
            <person name="Kaupe I."/>
            <person name="Breitwieser F.P."/>
            <person name="Buerckstuemmer T."/>
            <person name="Bennett K.L."/>
            <person name="Superti-Furga G."/>
            <person name="Colinge J."/>
        </authorList>
    </citation>
    <scope>IDENTIFICATION BY MASS SPECTROMETRY [LARGE SCALE ANALYSIS]</scope>
</reference>
<reference key="7">
    <citation type="journal article" date="2015" name="Proteomics">
        <title>N-terminome analysis of the human mitochondrial proteome.</title>
        <authorList>
            <person name="Vaca Jacome A.S."/>
            <person name="Rabilloud T."/>
            <person name="Schaeffer-Reiss C."/>
            <person name="Rompais M."/>
            <person name="Ayoub D."/>
            <person name="Lane L."/>
            <person name="Bairoch A."/>
            <person name="Van Dorsselaer A."/>
            <person name="Carapito C."/>
        </authorList>
    </citation>
    <scope>IDENTIFICATION BY MASS SPECTROMETRY [LARGE SCALE ANALYSIS]</scope>
</reference>
<reference evidence="9" key="8">
    <citation type="journal article" date="2014" name="Science">
        <title>Structure of the large ribosomal subunit from human mitochondria.</title>
        <authorList>
            <person name="Brown A."/>
            <person name="Amunts A."/>
            <person name="Bai X.C."/>
            <person name="Sugimoto Y."/>
            <person name="Edwards P.C."/>
            <person name="Murshudov G."/>
            <person name="Scheres S.H."/>
            <person name="Ramakrishnan V."/>
        </authorList>
    </citation>
    <scope>STRUCTURE BY ELECTRON MICROSCOPY (3.40 ANGSTROMS)</scope>
    <scope>SUBCELLULAR LOCATION</scope>
    <scope>SUBUNIT</scope>
</reference>
<reference evidence="10" key="9">
    <citation type="journal article" date="2015" name="Science">
        <title>Ribosome. The structure of the human mitochondrial ribosome.</title>
        <authorList>
            <person name="Amunts A."/>
            <person name="Brown A."/>
            <person name="Toots J."/>
            <person name="Scheres S.H."/>
            <person name="Ramakrishnan V."/>
        </authorList>
    </citation>
    <scope>STRUCTURE BY ELECTRON MICROSCOPY (3.50 ANGSTROMS)</scope>
    <scope>SUBCELLULAR LOCATION</scope>
    <scope>SUBUNIT</scope>
</reference>
<reference evidence="11 12" key="10">
    <citation type="journal article" date="2017" name="Nat. Struct. Mol. Biol.">
        <title>Structures of the human mitochondrial ribosome in native states of assembly.</title>
        <authorList>
            <person name="Brown A."/>
            <person name="Rathore S."/>
            <person name="Kimanius D."/>
            <person name="Aibara S."/>
            <person name="Bai X.C."/>
            <person name="Rorbach J."/>
            <person name="Amunts A."/>
            <person name="Ramakrishnan V."/>
        </authorList>
    </citation>
    <scope>STRUCTURE BY ELECTRON MICROSCOPY (3.03 ANGSTROMS)</scope>
    <scope>SUBCELLULAR LOCATION</scope>
    <scope>SUBUNIT</scope>
</reference>
<reference evidence="13 14" key="11">
    <citation type="journal article" date="2022" name="Nat. Commun.">
        <title>A late-stage assembly checkpoint of the human mitochondrial ribosome large subunit.</title>
        <authorList>
            <person name="Rebelo-Guiomar P."/>
            <person name="Pellegrino S."/>
            <person name="Dent K.C."/>
            <person name="Sas-Chen A."/>
            <person name="Miller-Fleming L."/>
            <person name="Garone C."/>
            <person name="Van Haute L."/>
            <person name="Rogan J.F."/>
            <person name="Dinan A."/>
            <person name="Firth A.E."/>
            <person name="Andrews B."/>
            <person name="Whitworth A.J."/>
            <person name="Schwartz S."/>
            <person name="Warren A.J."/>
            <person name="Minczuk M."/>
        </authorList>
    </citation>
    <scope>STRUCTURE BY ELECTRON MICROSCOPY (2.9 ANGSTROMS) IN COMPLEX WITH MTLSU</scope>
    <scope>SUBUNIT</scope>
</reference>
<gene>
    <name type="primary">MRPL38</name>
    <name type="ORF">HSPC262</name>
</gene>
<protein>
    <recommendedName>
        <fullName evidence="7">Large ribosomal subunit protein mL38</fullName>
    </recommendedName>
    <alternativeName>
        <fullName>39S ribosomal protein L38, mitochondrial</fullName>
        <shortName>L38mt</shortName>
        <shortName>MRP-L38</shortName>
    </alternativeName>
</protein>
<feature type="transit peptide" description="Mitochondrion" evidence="1">
    <location>
        <begin position="1"/>
        <end position="26"/>
    </location>
</feature>
<feature type="chain" id="PRO_0000261652" description="Large ribosomal subunit protein mL38">
    <location>
        <begin position="27"/>
        <end position="380"/>
    </location>
</feature>
<feature type="coiled-coil region" evidence="1">
    <location>
        <begin position="99"/>
        <end position="127"/>
    </location>
</feature>
<feature type="splice variant" id="VSP_056090" description="In isoform 2." evidence="6">
    <location>
        <begin position="1"/>
        <end position="184"/>
    </location>
</feature>
<feature type="sequence variant" id="VAR_059808" description="In dbSNP:rs34136221.">
    <original>R</original>
    <variation>W</variation>
    <location>
        <position position="99"/>
    </location>
</feature>
<feature type="sequence variant" id="VAR_029472" description="In dbSNP:rs9191.">
    <original>D</original>
    <variation>H</variation>
    <location>
        <position position="371"/>
    </location>
</feature>
<feature type="strand" evidence="16">
    <location>
        <begin position="38"/>
        <end position="40"/>
    </location>
</feature>
<feature type="turn" evidence="19">
    <location>
        <begin position="45"/>
        <end position="47"/>
    </location>
</feature>
<feature type="helix" evidence="17">
    <location>
        <begin position="54"/>
        <end position="66"/>
    </location>
</feature>
<feature type="helix" evidence="17">
    <location>
        <begin position="74"/>
        <end position="78"/>
    </location>
</feature>
<feature type="helix" evidence="17">
    <location>
        <begin position="100"/>
        <end position="115"/>
    </location>
</feature>
<feature type="helix" evidence="17">
    <location>
        <begin position="117"/>
        <end position="124"/>
    </location>
</feature>
<feature type="helix" evidence="17">
    <location>
        <begin position="132"/>
        <end position="142"/>
    </location>
</feature>
<feature type="helix" evidence="17">
    <location>
        <begin position="144"/>
        <end position="154"/>
    </location>
</feature>
<feature type="helix" evidence="17">
    <location>
        <begin position="157"/>
        <end position="161"/>
    </location>
</feature>
<feature type="strand" evidence="15">
    <location>
        <begin position="162"/>
        <end position="164"/>
    </location>
</feature>
<feature type="strand" evidence="17">
    <location>
        <begin position="174"/>
        <end position="179"/>
    </location>
</feature>
<feature type="turn" evidence="17">
    <location>
        <begin position="180"/>
        <end position="182"/>
    </location>
</feature>
<feature type="strand" evidence="17">
    <location>
        <begin position="183"/>
        <end position="187"/>
    </location>
</feature>
<feature type="strand" evidence="18">
    <location>
        <begin position="189"/>
        <end position="192"/>
    </location>
</feature>
<feature type="turn" evidence="17">
    <location>
        <begin position="195"/>
        <end position="198"/>
    </location>
</feature>
<feature type="strand" evidence="17">
    <location>
        <begin position="203"/>
        <end position="205"/>
    </location>
</feature>
<feature type="strand" evidence="17">
    <location>
        <begin position="213"/>
        <end position="220"/>
    </location>
</feature>
<feature type="strand" evidence="17">
    <location>
        <begin position="231"/>
        <end position="241"/>
    </location>
</feature>
<feature type="turn" evidence="15">
    <location>
        <begin position="245"/>
        <end position="247"/>
    </location>
</feature>
<feature type="strand" evidence="17">
    <location>
        <begin position="248"/>
        <end position="252"/>
    </location>
</feature>
<feature type="strand" evidence="17">
    <location>
        <begin position="266"/>
        <end position="277"/>
    </location>
</feature>
<feature type="helix" evidence="17">
    <location>
        <begin position="293"/>
        <end position="296"/>
    </location>
</feature>
<feature type="helix" evidence="17">
    <location>
        <begin position="300"/>
        <end position="305"/>
    </location>
</feature>
<feature type="turn" evidence="17">
    <location>
        <begin position="306"/>
        <end position="310"/>
    </location>
</feature>
<feature type="strand" evidence="17">
    <location>
        <begin position="311"/>
        <end position="321"/>
    </location>
</feature>
<feature type="helix" evidence="17">
    <location>
        <begin position="325"/>
        <end position="333"/>
    </location>
</feature>
<feature type="strand" evidence="17">
    <location>
        <begin position="339"/>
        <end position="345"/>
    </location>
</feature>
<feature type="helix" evidence="17">
    <location>
        <begin position="364"/>
        <end position="369"/>
    </location>
</feature>
<name>RM38_HUMAN</name>
<dbReference type="EMBL" id="AK024058">
    <property type="protein sequence ID" value="BAG51258.1"/>
    <property type="molecule type" value="mRNA"/>
</dbReference>
<dbReference type="EMBL" id="AC087289">
    <property type="status" value="NOT_ANNOTATED_CDS"/>
    <property type="molecule type" value="Genomic_DNA"/>
</dbReference>
<dbReference type="EMBL" id="BC013311">
    <property type="protein sequence ID" value="AAH13311.1"/>
    <property type="status" value="ALT_INIT"/>
    <property type="molecule type" value="mRNA"/>
</dbReference>
<dbReference type="EMBL" id="AB051345">
    <property type="protein sequence ID" value="BAB54935.1"/>
    <property type="molecule type" value="Genomic_DNA"/>
</dbReference>
<dbReference type="EMBL" id="AF161380">
    <property type="protein sequence ID" value="AAF28940.1"/>
    <property type="molecule type" value="mRNA"/>
</dbReference>
<dbReference type="CCDS" id="CCDS11733.2">
    <molecule id="Q96DV4-1"/>
</dbReference>
<dbReference type="RefSeq" id="NP_115867.2">
    <molecule id="Q96DV4-1"/>
    <property type="nucleotide sequence ID" value="NM_032478.4"/>
</dbReference>
<dbReference type="PDB" id="3J7Y">
    <property type="method" value="EM"/>
    <property type="resolution" value="3.40 A"/>
    <property type="chains" value="6=1-380"/>
</dbReference>
<dbReference type="PDB" id="3J9M">
    <property type="method" value="EM"/>
    <property type="resolution" value="3.50 A"/>
    <property type="chains" value="6=1-380"/>
</dbReference>
<dbReference type="PDB" id="5OOL">
    <property type="method" value="EM"/>
    <property type="resolution" value="3.06 A"/>
    <property type="chains" value="6=1-380"/>
</dbReference>
<dbReference type="PDB" id="5OOM">
    <property type="method" value="EM"/>
    <property type="resolution" value="3.03 A"/>
    <property type="chains" value="6=1-380"/>
</dbReference>
<dbReference type="PDB" id="6I9R">
    <property type="method" value="EM"/>
    <property type="resolution" value="3.90 A"/>
    <property type="chains" value="6=1-380"/>
</dbReference>
<dbReference type="PDB" id="6NU2">
    <property type="method" value="EM"/>
    <property type="resolution" value="3.90 A"/>
    <property type="chains" value="6=27-380"/>
</dbReference>
<dbReference type="PDB" id="6NU3">
    <property type="method" value="EM"/>
    <property type="resolution" value="4.40 A"/>
    <property type="chains" value="6=1-380"/>
</dbReference>
<dbReference type="PDB" id="6VLZ">
    <property type="method" value="EM"/>
    <property type="resolution" value="2.97 A"/>
    <property type="chains" value="6=1-380"/>
</dbReference>
<dbReference type="PDB" id="6VMI">
    <property type="method" value="EM"/>
    <property type="resolution" value="2.96 A"/>
    <property type="chains" value="6=1-380"/>
</dbReference>
<dbReference type="PDB" id="6ZM5">
    <property type="method" value="EM"/>
    <property type="resolution" value="2.89 A"/>
    <property type="chains" value="6=1-380"/>
</dbReference>
<dbReference type="PDB" id="6ZM6">
    <property type="method" value="EM"/>
    <property type="resolution" value="2.59 A"/>
    <property type="chains" value="6=1-380"/>
</dbReference>
<dbReference type="PDB" id="6ZS9">
    <property type="method" value="EM"/>
    <property type="resolution" value="4.00 A"/>
    <property type="chains" value="6=1-380"/>
</dbReference>
<dbReference type="PDB" id="6ZSA">
    <property type="method" value="EM"/>
    <property type="resolution" value="4.00 A"/>
    <property type="chains" value="6=1-380"/>
</dbReference>
<dbReference type="PDB" id="6ZSB">
    <property type="method" value="EM"/>
    <property type="resolution" value="4.50 A"/>
    <property type="chains" value="6=1-380"/>
</dbReference>
<dbReference type="PDB" id="6ZSC">
    <property type="method" value="EM"/>
    <property type="resolution" value="3.50 A"/>
    <property type="chains" value="6=1-380"/>
</dbReference>
<dbReference type="PDB" id="6ZSD">
    <property type="method" value="EM"/>
    <property type="resolution" value="3.70 A"/>
    <property type="chains" value="6=1-380"/>
</dbReference>
<dbReference type="PDB" id="6ZSE">
    <property type="method" value="EM"/>
    <property type="resolution" value="5.00 A"/>
    <property type="chains" value="6=1-380"/>
</dbReference>
<dbReference type="PDB" id="6ZSG">
    <property type="method" value="EM"/>
    <property type="resolution" value="4.00 A"/>
    <property type="chains" value="6=1-380"/>
</dbReference>
<dbReference type="PDB" id="7A5F">
    <property type="method" value="EM"/>
    <property type="resolution" value="4.40 A"/>
    <property type="chains" value="63=1-380"/>
</dbReference>
<dbReference type="PDB" id="7A5G">
    <property type="method" value="EM"/>
    <property type="resolution" value="4.33 A"/>
    <property type="chains" value="63=1-380"/>
</dbReference>
<dbReference type="PDB" id="7A5H">
    <property type="method" value="EM"/>
    <property type="resolution" value="3.30 A"/>
    <property type="chains" value="6=1-380"/>
</dbReference>
<dbReference type="PDB" id="7A5I">
    <property type="method" value="EM"/>
    <property type="resolution" value="3.70 A"/>
    <property type="chains" value="63=1-380"/>
</dbReference>
<dbReference type="PDB" id="7A5J">
    <property type="method" value="EM"/>
    <property type="resolution" value="3.10 A"/>
    <property type="chains" value="6=1-380"/>
</dbReference>
<dbReference type="PDB" id="7A5K">
    <property type="method" value="EM"/>
    <property type="resolution" value="3.70 A"/>
    <property type="chains" value="63=1-380"/>
</dbReference>
<dbReference type="PDB" id="7L08">
    <property type="method" value="EM"/>
    <property type="resolution" value="3.49 A"/>
    <property type="chains" value="6=1-380"/>
</dbReference>
<dbReference type="PDB" id="7L20">
    <property type="method" value="EM"/>
    <property type="resolution" value="3.15 A"/>
    <property type="chains" value="6=1-380"/>
</dbReference>
<dbReference type="PDB" id="7O9K">
    <property type="method" value="EM"/>
    <property type="resolution" value="3.10 A"/>
    <property type="chains" value="6=1-380"/>
</dbReference>
<dbReference type="PDB" id="7O9M">
    <property type="method" value="EM"/>
    <property type="resolution" value="2.50 A"/>
    <property type="chains" value="6=1-380"/>
</dbReference>
<dbReference type="PDB" id="7ODR">
    <property type="method" value="EM"/>
    <property type="resolution" value="2.90 A"/>
    <property type="chains" value="6=1-380"/>
</dbReference>
<dbReference type="PDB" id="7ODS">
    <property type="method" value="EM"/>
    <property type="resolution" value="3.10 A"/>
    <property type="chains" value="6=1-380"/>
</dbReference>
<dbReference type="PDB" id="7ODT">
    <property type="method" value="EM"/>
    <property type="resolution" value="3.10 A"/>
    <property type="chains" value="6=1-380"/>
</dbReference>
<dbReference type="PDB" id="7OF0">
    <property type="method" value="EM"/>
    <property type="resolution" value="2.20 A"/>
    <property type="chains" value="6=1-380"/>
</dbReference>
<dbReference type="PDB" id="7OF2">
    <property type="method" value="EM"/>
    <property type="resolution" value="2.70 A"/>
    <property type="chains" value="6=1-380"/>
</dbReference>
<dbReference type="PDB" id="7OF3">
    <property type="method" value="EM"/>
    <property type="resolution" value="2.70 A"/>
    <property type="chains" value="6=1-380"/>
</dbReference>
<dbReference type="PDB" id="7OF4">
    <property type="method" value="EM"/>
    <property type="resolution" value="2.70 A"/>
    <property type="chains" value="6=1-380"/>
</dbReference>
<dbReference type="PDB" id="7OF5">
    <property type="method" value="EM"/>
    <property type="resolution" value="2.90 A"/>
    <property type="chains" value="6=1-380"/>
</dbReference>
<dbReference type="PDB" id="7OF6">
    <property type="method" value="EM"/>
    <property type="resolution" value="2.60 A"/>
    <property type="chains" value="6=1-380"/>
</dbReference>
<dbReference type="PDB" id="7OF7">
    <property type="method" value="EM"/>
    <property type="resolution" value="2.50 A"/>
    <property type="chains" value="6=1-380"/>
</dbReference>
<dbReference type="PDB" id="7OG4">
    <property type="method" value="EM"/>
    <property type="resolution" value="3.80 A"/>
    <property type="chains" value="6=1-380"/>
</dbReference>
<dbReference type="PDB" id="7OI6">
    <property type="method" value="EM"/>
    <property type="resolution" value="5.70 A"/>
    <property type="chains" value="6=1-380"/>
</dbReference>
<dbReference type="PDB" id="7OI7">
    <property type="method" value="EM"/>
    <property type="resolution" value="3.50 A"/>
    <property type="chains" value="6=1-380"/>
</dbReference>
<dbReference type="PDB" id="7OI8">
    <property type="method" value="EM"/>
    <property type="resolution" value="3.50 A"/>
    <property type="chains" value="6=1-380"/>
</dbReference>
<dbReference type="PDB" id="7OI9">
    <property type="method" value="EM"/>
    <property type="resolution" value="3.30 A"/>
    <property type="chains" value="6=1-380"/>
</dbReference>
<dbReference type="PDB" id="7OIA">
    <property type="method" value="EM"/>
    <property type="resolution" value="3.20 A"/>
    <property type="chains" value="6=1-380"/>
</dbReference>
<dbReference type="PDB" id="7OIB">
    <property type="method" value="EM"/>
    <property type="resolution" value="3.30 A"/>
    <property type="chains" value="6=1-380"/>
</dbReference>
<dbReference type="PDB" id="7OIC">
    <property type="method" value="EM"/>
    <property type="resolution" value="3.10 A"/>
    <property type="chains" value="6=1-380"/>
</dbReference>
<dbReference type="PDB" id="7OID">
    <property type="method" value="EM"/>
    <property type="resolution" value="3.70 A"/>
    <property type="chains" value="6=1-380"/>
</dbReference>
<dbReference type="PDB" id="7OIE">
    <property type="method" value="EM"/>
    <property type="resolution" value="3.50 A"/>
    <property type="chains" value="6=1-380"/>
</dbReference>
<dbReference type="PDB" id="7PD3">
    <property type="method" value="EM"/>
    <property type="resolution" value="3.40 A"/>
    <property type="chains" value="6=1-380"/>
</dbReference>
<dbReference type="PDB" id="7PO4">
    <property type="method" value="EM"/>
    <property type="resolution" value="2.56 A"/>
    <property type="chains" value="6=1-380"/>
</dbReference>
<dbReference type="PDB" id="7QH6">
    <property type="method" value="EM"/>
    <property type="resolution" value="3.08 A"/>
    <property type="chains" value="6=1-380"/>
</dbReference>
<dbReference type="PDB" id="7QH7">
    <property type="method" value="EM"/>
    <property type="resolution" value="2.89 A"/>
    <property type="chains" value="6=27-380"/>
</dbReference>
<dbReference type="PDB" id="7QI4">
    <property type="method" value="EM"/>
    <property type="resolution" value="2.21 A"/>
    <property type="chains" value="6=1-380"/>
</dbReference>
<dbReference type="PDB" id="7QI5">
    <property type="method" value="EM"/>
    <property type="resolution" value="2.63 A"/>
    <property type="chains" value="6=1-380"/>
</dbReference>
<dbReference type="PDB" id="7QI6">
    <property type="method" value="EM"/>
    <property type="resolution" value="2.98 A"/>
    <property type="chains" value="6=1-380"/>
</dbReference>
<dbReference type="PDB" id="8ANY">
    <property type="method" value="EM"/>
    <property type="resolution" value="2.85 A"/>
    <property type="chains" value="6=1-380"/>
</dbReference>
<dbReference type="PDB" id="8K2A">
    <property type="method" value="EM"/>
    <property type="resolution" value="2.90 A"/>
    <property type="chains" value="Ll=1-380"/>
</dbReference>
<dbReference type="PDB" id="8K2B">
    <property type="method" value="EM"/>
    <property type="resolution" value="3.40 A"/>
    <property type="chains" value="Ll=1-380"/>
</dbReference>
<dbReference type="PDB" id="8OIR">
    <property type="method" value="EM"/>
    <property type="resolution" value="3.10 A"/>
    <property type="chains" value="Bn=1-380"/>
</dbReference>
<dbReference type="PDB" id="8OIT">
    <property type="method" value="EM"/>
    <property type="resolution" value="2.90 A"/>
    <property type="chains" value="Bn=1-380"/>
</dbReference>
<dbReference type="PDB" id="8PK0">
    <property type="method" value="EM"/>
    <property type="resolution" value="3.03 A"/>
    <property type="chains" value="6=1-380"/>
</dbReference>
<dbReference type="PDB" id="8QSJ">
    <property type="method" value="EM"/>
    <property type="resolution" value="3.00 A"/>
    <property type="chains" value="6=1-380"/>
</dbReference>
<dbReference type="PDB" id="8QU1">
    <property type="method" value="EM"/>
    <property type="resolution" value="2.74 A"/>
    <property type="chains" value="6=1-380"/>
</dbReference>
<dbReference type="PDB" id="8QU5">
    <property type="method" value="EM"/>
    <property type="resolution" value="2.42 A"/>
    <property type="chains" value="6=1-380"/>
</dbReference>
<dbReference type="PDB" id="8RRI">
    <property type="method" value="EM"/>
    <property type="resolution" value="2.40 A"/>
    <property type="chains" value="6=1-380"/>
</dbReference>
<dbReference type="PDB" id="8XT0">
    <property type="method" value="EM"/>
    <property type="resolution" value="3.20 A"/>
    <property type="chains" value="Ll=1-380"/>
</dbReference>
<dbReference type="PDB" id="8XT1">
    <property type="method" value="EM"/>
    <property type="resolution" value="3.10 A"/>
    <property type="chains" value="Ll=1-380"/>
</dbReference>
<dbReference type="PDB" id="8XT2">
    <property type="method" value="EM"/>
    <property type="resolution" value="3.30 A"/>
    <property type="chains" value="Ll=1-380"/>
</dbReference>
<dbReference type="PDB" id="8XT3">
    <property type="method" value="EM"/>
    <property type="resolution" value="3.10 A"/>
    <property type="chains" value="Ll=1-380"/>
</dbReference>
<dbReference type="PDBsum" id="3J7Y"/>
<dbReference type="PDBsum" id="3J9M"/>
<dbReference type="PDBsum" id="5OOL"/>
<dbReference type="PDBsum" id="5OOM"/>
<dbReference type="PDBsum" id="6I9R"/>
<dbReference type="PDBsum" id="6NU2"/>
<dbReference type="PDBsum" id="6NU3"/>
<dbReference type="PDBsum" id="6VLZ"/>
<dbReference type="PDBsum" id="6VMI"/>
<dbReference type="PDBsum" id="6ZM5"/>
<dbReference type="PDBsum" id="6ZM6"/>
<dbReference type="PDBsum" id="6ZS9"/>
<dbReference type="PDBsum" id="6ZSA"/>
<dbReference type="PDBsum" id="6ZSB"/>
<dbReference type="PDBsum" id="6ZSC"/>
<dbReference type="PDBsum" id="6ZSD"/>
<dbReference type="PDBsum" id="6ZSE"/>
<dbReference type="PDBsum" id="6ZSG"/>
<dbReference type="PDBsum" id="7A5F"/>
<dbReference type="PDBsum" id="7A5G"/>
<dbReference type="PDBsum" id="7A5H"/>
<dbReference type="PDBsum" id="7A5I"/>
<dbReference type="PDBsum" id="7A5J"/>
<dbReference type="PDBsum" id="7A5K"/>
<dbReference type="PDBsum" id="7L08"/>
<dbReference type="PDBsum" id="7L20"/>
<dbReference type="PDBsum" id="7O9K"/>
<dbReference type="PDBsum" id="7O9M"/>
<dbReference type="PDBsum" id="7ODR"/>
<dbReference type="PDBsum" id="7ODS"/>
<dbReference type="PDBsum" id="7ODT"/>
<dbReference type="PDBsum" id="7OF0"/>
<dbReference type="PDBsum" id="7OF2"/>
<dbReference type="PDBsum" id="7OF3"/>
<dbReference type="PDBsum" id="7OF4"/>
<dbReference type="PDBsum" id="7OF5"/>
<dbReference type="PDBsum" id="7OF6"/>
<dbReference type="PDBsum" id="7OF7"/>
<dbReference type="PDBsum" id="7OG4"/>
<dbReference type="PDBsum" id="7OI6"/>
<dbReference type="PDBsum" id="7OI7"/>
<dbReference type="PDBsum" id="7OI8"/>
<dbReference type="PDBsum" id="7OI9"/>
<dbReference type="PDBsum" id="7OIA"/>
<dbReference type="PDBsum" id="7OIB"/>
<dbReference type="PDBsum" id="7OIC"/>
<dbReference type="PDBsum" id="7OID"/>
<dbReference type="PDBsum" id="7OIE"/>
<dbReference type="PDBsum" id="7PD3"/>
<dbReference type="PDBsum" id="7PO4"/>
<dbReference type="PDBsum" id="7QH6"/>
<dbReference type="PDBsum" id="7QH7"/>
<dbReference type="PDBsum" id="7QI4"/>
<dbReference type="PDBsum" id="7QI5"/>
<dbReference type="PDBsum" id="7QI6"/>
<dbReference type="PDBsum" id="8ANY"/>
<dbReference type="PDBsum" id="8K2A"/>
<dbReference type="PDBsum" id="8K2B"/>
<dbReference type="PDBsum" id="8OIR"/>
<dbReference type="PDBsum" id="8OIT"/>
<dbReference type="PDBsum" id="8PK0"/>
<dbReference type="PDBsum" id="8QSJ"/>
<dbReference type="PDBsum" id="8QU1"/>
<dbReference type="PDBsum" id="8QU5"/>
<dbReference type="PDBsum" id="8RRI"/>
<dbReference type="PDBsum" id="8XT0"/>
<dbReference type="PDBsum" id="8XT1"/>
<dbReference type="PDBsum" id="8XT2"/>
<dbReference type="PDBsum" id="8XT3"/>
<dbReference type="EMDB" id="EMD-0514"/>
<dbReference type="EMDB" id="EMD-0515"/>
<dbReference type="EMDB" id="EMD-11278"/>
<dbReference type="EMDB" id="EMD-11279"/>
<dbReference type="EMDB" id="EMD-11390"/>
<dbReference type="EMDB" id="EMD-11391"/>
<dbReference type="EMDB" id="EMD-11392"/>
<dbReference type="EMDB" id="EMD-11393"/>
<dbReference type="EMDB" id="EMD-11394"/>
<dbReference type="EMDB" id="EMD-11395"/>
<dbReference type="EMDB" id="EMD-11397"/>
<dbReference type="EMDB" id="EMD-11641"/>
<dbReference type="EMDB" id="EMD-11642"/>
<dbReference type="EMDB" id="EMD-11643"/>
<dbReference type="EMDB" id="EMD-11644"/>
<dbReference type="EMDB" id="EMD-11645"/>
<dbReference type="EMDB" id="EMD-11646"/>
<dbReference type="EMDB" id="EMD-12763"/>
<dbReference type="EMDB" id="EMD-12764"/>
<dbReference type="EMDB" id="EMD-12845"/>
<dbReference type="EMDB" id="EMD-12846"/>
<dbReference type="EMDB" id="EMD-12847"/>
<dbReference type="EMDB" id="EMD-12865"/>
<dbReference type="EMDB" id="EMD-12867"/>
<dbReference type="EMDB" id="EMD-12868"/>
<dbReference type="EMDB" id="EMD-12869"/>
<dbReference type="EMDB" id="EMD-12870"/>
<dbReference type="EMDB" id="EMD-12871"/>
<dbReference type="EMDB" id="EMD-12872"/>
<dbReference type="EMDB" id="EMD-12877"/>
<dbReference type="EMDB" id="EMD-12919"/>
<dbReference type="EMDB" id="EMD-12920"/>
<dbReference type="EMDB" id="EMD-12921"/>
<dbReference type="EMDB" id="EMD-12922"/>
<dbReference type="EMDB" id="EMD-12923"/>
<dbReference type="EMDB" id="EMD-12924"/>
<dbReference type="EMDB" id="EMD-12925"/>
<dbReference type="EMDB" id="EMD-12926"/>
<dbReference type="EMDB" id="EMD-12927"/>
<dbReference type="EMDB" id="EMD-13329"/>
<dbReference type="EMDB" id="EMD-13562"/>
<dbReference type="EMDB" id="EMD-13965"/>
<dbReference type="EMDB" id="EMD-13967"/>
<dbReference type="EMDB" id="EMD-13980"/>
<dbReference type="EMDB" id="EMD-13981"/>
<dbReference type="EMDB" id="EMD-13982"/>
<dbReference type="EMDB" id="EMD-15544"/>
<dbReference type="EMDB" id="EMD-16897"/>
<dbReference type="EMDB" id="EMD-16899"/>
<dbReference type="EMDB" id="EMD-17719"/>
<dbReference type="EMDB" id="EMD-19460"/>
<dbReference type="EMDB" id="EMD-21233"/>
<dbReference type="EMDB" id="EMD-21242"/>
<dbReference type="EMDB" id="EMD-23096"/>
<dbReference type="EMDB" id="EMD-23121"/>
<dbReference type="EMDB" id="EMD-36836"/>
<dbReference type="EMDB" id="EMD-36837"/>
<dbReference type="EMDB" id="EMD-3842"/>
<dbReference type="EMDB" id="EMD-3843"/>
<dbReference type="EMDB" id="EMD-38632"/>
<dbReference type="EMDB" id="EMD-38633"/>
<dbReference type="EMDB" id="EMD-38634"/>
<dbReference type="EMDB" id="EMD-38635"/>
<dbReference type="EMDB" id="EMD-4434"/>
<dbReference type="SMR" id="Q96DV4"/>
<dbReference type="BioGRID" id="122365">
    <property type="interactions" value="265"/>
</dbReference>
<dbReference type="ComplexPortal" id="CPX-5226">
    <property type="entry name" value="39S mitochondrial large ribosomal subunit"/>
</dbReference>
<dbReference type="CORUM" id="Q96DV4"/>
<dbReference type="FunCoup" id="Q96DV4">
    <property type="interactions" value="1676"/>
</dbReference>
<dbReference type="IntAct" id="Q96DV4">
    <property type="interactions" value="164"/>
</dbReference>
<dbReference type="MINT" id="Q96DV4"/>
<dbReference type="STRING" id="9606.ENSP00000308275"/>
<dbReference type="GlyGen" id="Q96DV4">
    <property type="glycosylation" value="2 sites, 1 O-linked glycan (1 site)"/>
</dbReference>
<dbReference type="iPTMnet" id="Q96DV4"/>
<dbReference type="PhosphoSitePlus" id="Q96DV4"/>
<dbReference type="SwissPalm" id="Q96DV4"/>
<dbReference type="BioMuta" id="MRPL38"/>
<dbReference type="DMDM" id="118573679"/>
<dbReference type="jPOST" id="Q96DV4"/>
<dbReference type="MassIVE" id="Q96DV4"/>
<dbReference type="PaxDb" id="9606-ENSP00000308275"/>
<dbReference type="PeptideAtlas" id="Q96DV4"/>
<dbReference type="ProteomicsDB" id="3499"/>
<dbReference type="ProteomicsDB" id="76330">
    <molecule id="Q96DV4-1"/>
</dbReference>
<dbReference type="Pumba" id="Q96DV4"/>
<dbReference type="Antibodypedia" id="19644">
    <property type="antibodies" value="105 antibodies from 24 providers"/>
</dbReference>
<dbReference type="DNASU" id="64978"/>
<dbReference type="Ensembl" id="ENST00000309352.4">
    <molecule id="Q96DV4-1"/>
    <property type="protein sequence ID" value="ENSP00000308275.4"/>
    <property type="gene ID" value="ENSG00000204316.13"/>
</dbReference>
<dbReference type="GeneID" id="64978"/>
<dbReference type="KEGG" id="hsa:64978"/>
<dbReference type="MANE-Select" id="ENST00000309352.4">
    <property type="protein sequence ID" value="ENSP00000308275.4"/>
    <property type="RefSeq nucleotide sequence ID" value="NM_032478.4"/>
    <property type="RefSeq protein sequence ID" value="NP_115867.2"/>
</dbReference>
<dbReference type="UCSC" id="uc010wso.2">
    <molecule id="Q96DV4-1"/>
    <property type="organism name" value="human"/>
</dbReference>
<dbReference type="AGR" id="HGNC:14033"/>
<dbReference type="CTD" id="64978"/>
<dbReference type="DisGeNET" id="64978"/>
<dbReference type="GeneCards" id="MRPL38"/>
<dbReference type="HGNC" id="HGNC:14033">
    <property type="gene designation" value="MRPL38"/>
</dbReference>
<dbReference type="HPA" id="ENSG00000204316">
    <property type="expression patterns" value="Low tissue specificity"/>
</dbReference>
<dbReference type="MIM" id="611844">
    <property type="type" value="gene"/>
</dbReference>
<dbReference type="neXtProt" id="NX_Q96DV4"/>
<dbReference type="OpenTargets" id="ENSG00000204316"/>
<dbReference type="PharmGKB" id="PA30969"/>
<dbReference type="VEuPathDB" id="HostDB:ENSG00000204316"/>
<dbReference type="eggNOG" id="KOG3346">
    <property type="taxonomic scope" value="Eukaryota"/>
</dbReference>
<dbReference type="GeneTree" id="ENSGT00900000141125"/>
<dbReference type="HOGENOM" id="CLU_043994_0_0_1"/>
<dbReference type="InParanoid" id="Q96DV4"/>
<dbReference type="OMA" id="PQKKFPH"/>
<dbReference type="OrthoDB" id="2153661at2759"/>
<dbReference type="PAN-GO" id="Q96DV4">
    <property type="GO annotations" value="1 GO annotation based on evolutionary models"/>
</dbReference>
<dbReference type="PhylomeDB" id="Q96DV4"/>
<dbReference type="TreeFam" id="TF315074"/>
<dbReference type="PathwayCommons" id="Q96DV4"/>
<dbReference type="Reactome" id="R-HSA-5368286">
    <property type="pathway name" value="Mitochondrial translation initiation"/>
</dbReference>
<dbReference type="Reactome" id="R-HSA-5389840">
    <property type="pathway name" value="Mitochondrial translation elongation"/>
</dbReference>
<dbReference type="Reactome" id="R-HSA-5419276">
    <property type="pathway name" value="Mitochondrial translation termination"/>
</dbReference>
<dbReference type="SignaLink" id="Q96DV4"/>
<dbReference type="SIGNOR" id="Q96DV4"/>
<dbReference type="BioGRID-ORCS" id="64978">
    <property type="hits" value="523 hits in 1163 CRISPR screens"/>
</dbReference>
<dbReference type="ChiTaRS" id="MRPL38">
    <property type="organism name" value="human"/>
</dbReference>
<dbReference type="EvolutionaryTrace" id="Q96DV4"/>
<dbReference type="GenomeRNAi" id="64978"/>
<dbReference type="Pharos" id="Q96DV4">
    <property type="development level" value="Tdark"/>
</dbReference>
<dbReference type="PRO" id="PR:Q96DV4"/>
<dbReference type="Proteomes" id="UP000005640">
    <property type="component" value="Chromosome 17"/>
</dbReference>
<dbReference type="RNAct" id="Q96DV4">
    <property type="molecule type" value="protein"/>
</dbReference>
<dbReference type="Bgee" id="ENSG00000204316">
    <property type="expression patterns" value="Expressed in right hemisphere of cerebellum and 97 other cell types or tissues"/>
</dbReference>
<dbReference type="GO" id="GO:0005829">
    <property type="term" value="C:cytosol"/>
    <property type="evidence" value="ECO:0000314"/>
    <property type="project" value="HPA"/>
</dbReference>
<dbReference type="GO" id="GO:0005743">
    <property type="term" value="C:mitochondrial inner membrane"/>
    <property type="evidence" value="ECO:0000304"/>
    <property type="project" value="Reactome"/>
</dbReference>
<dbReference type="GO" id="GO:0005762">
    <property type="term" value="C:mitochondrial large ribosomal subunit"/>
    <property type="evidence" value="ECO:0000314"/>
    <property type="project" value="UniProtKB"/>
</dbReference>
<dbReference type="GO" id="GO:0005739">
    <property type="term" value="C:mitochondrion"/>
    <property type="evidence" value="ECO:0000314"/>
    <property type="project" value="HPA"/>
</dbReference>
<dbReference type="GO" id="GO:0032543">
    <property type="term" value="P:mitochondrial translation"/>
    <property type="evidence" value="ECO:0000303"/>
    <property type="project" value="ComplexPortal"/>
</dbReference>
<dbReference type="CDD" id="cd00866">
    <property type="entry name" value="PEBP_euk"/>
    <property type="match status" value="1"/>
</dbReference>
<dbReference type="FunFam" id="3.90.280.10:FF:000002">
    <property type="entry name" value="39S ribosomal protein L38, mitochondrial"/>
    <property type="match status" value="1"/>
</dbReference>
<dbReference type="Gene3D" id="3.90.280.10">
    <property type="entry name" value="PEBP-like"/>
    <property type="match status" value="1"/>
</dbReference>
<dbReference type="InterPro" id="IPR008914">
    <property type="entry name" value="PEBP"/>
</dbReference>
<dbReference type="InterPro" id="IPR036610">
    <property type="entry name" value="PEBP-like_sf"/>
</dbReference>
<dbReference type="InterPro" id="IPR035810">
    <property type="entry name" value="PEBP_euk"/>
</dbReference>
<dbReference type="PANTHER" id="PTHR11362:SF133">
    <property type="entry name" value="LARGE RIBOSOMAL SUBUNIT PROTEIN ML38"/>
    <property type="match status" value="1"/>
</dbReference>
<dbReference type="PANTHER" id="PTHR11362">
    <property type="entry name" value="PHOSPHATIDYLETHANOLAMINE-BINDING PROTEIN"/>
    <property type="match status" value="1"/>
</dbReference>
<dbReference type="Pfam" id="PF01161">
    <property type="entry name" value="PBP"/>
    <property type="match status" value="1"/>
</dbReference>
<dbReference type="SUPFAM" id="SSF49777">
    <property type="entry name" value="PEBP-like"/>
    <property type="match status" value="1"/>
</dbReference>
<sequence>MAAPWWRAALCECRRWRGFSTSAVLGRRTPPLGPMPNSDIDLSNLERLEKYRSFDRYRRRAEQEAQAPHWWRTYREYFGEKTDPKEKIDIGLPPPKVSRTQQLLERKQAIQELRANVEEERAARLRTASVPLDAVRAEWERTCGPYHKQRLAEYYGLYRDLFHGATFVPRVPLHVAYAVGEDDLMPVYCGNEVTPTEAAQAPEVTYEAEEGSLWTLLLTSLDGHLLEPDAEYLHWLLTNIPGNRVAEGQVTCPYLPPFPARGSGIHRLAFLLFKQDQPIDFSEDARPSPCYQLAQRTFRTFDFYKKHQETMTPAGLSFFQCRWDDSVTYIFHQLLDMREPVFEFVRPPPYHPKQKRFPHRQPLRYLDRYRDSHEPTYGIY</sequence>